<accession>A2YV85</accession>
<accession>Q0J5P3</accession>
<accession>Q68Q05</accession>
<accession>Q6ZA73</accession>
<dbReference type="EC" id="3.6.4.13"/>
<dbReference type="EMBL" id="AY644647">
    <property type="protein sequence ID" value="AAU01909.1"/>
    <property type="status" value="ALT_INIT"/>
    <property type="molecule type" value="mRNA"/>
</dbReference>
<dbReference type="EMBL" id="CM000133">
    <property type="status" value="NOT_ANNOTATED_CDS"/>
    <property type="molecule type" value="Genomic_DNA"/>
</dbReference>
<dbReference type="SMR" id="A2YV85"/>
<dbReference type="STRING" id="39946.A2YV85"/>
<dbReference type="Proteomes" id="UP000007015">
    <property type="component" value="Chromosome 8"/>
</dbReference>
<dbReference type="GO" id="GO:0005829">
    <property type="term" value="C:cytosol"/>
    <property type="evidence" value="ECO:0007669"/>
    <property type="project" value="TreeGrafter"/>
</dbReference>
<dbReference type="GO" id="GO:0005634">
    <property type="term" value="C:nucleus"/>
    <property type="evidence" value="ECO:0007669"/>
    <property type="project" value="InterPro"/>
</dbReference>
<dbReference type="GO" id="GO:0005524">
    <property type="term" value="F:ATP binding"/>
    <property type="evidence" value="ECO:0007669"/>
    <property type="project" value="UniProtKB-KW"/>
</dbReference>
<dbReference type="GO" id="GO:0016887">
    <property type="term" value="F:ATP hydrolysis activity"/>
    <property type="evidence" value="ECO:0007669"/>
    <property type="project" value="RHEA"/>
</dbReference>
<dbReference type="GO" id="GO:0003723">
    <property type="term" value="F:RNA binding"/>
    <property type="evidence" value="ECO:0007669"/>
    <property type="project" value="UniProtKB-KW"/>
</dbReference>
<dbReference type="GO" id="GO:0003724">
    <property type="term" value="F:RNA helicase activity"/>
    <property type="evidence" value="ECO:0007669"/>
    <property type="project" value="UniProtKB-EC"/>
</dbReference>
<dbReference type="CDD" id="cd18787">
    <property type="entry name" value="SF2_C_DEAD"/>
    <property type="match status" value="1"/>
</dbReference>
<dbReference type="Gene3D" id="3.40.50.300">
    <property type="entry name" value="P-loop containing nucleotide triphosphate hydrolases"/>
    <property type="match status" value="2"/>
</dbReference>
<dbReference type="InterPro" id="IPR012541">
    <property type="entry name" value="DBP10_C"/>
</dbReference>
<dbReference type="InterPro" id="IPR011545">
    <property type="entry name" value="DEAD/DEAH_box_helicase_dom"/>
</dbReference>
<dbReference type="InterPro" id="IPR050079">
    <property type="entry name" value="DEAD_box_RNA_helicase"/>
</dbReference>
<dbReference type="InterPro" id="IPR014001">
    <property type="entry name" value="Helicase_ATP-bd"/>
</dbReference>
<dbReference type="InterPro" id="IPR001650">
    <property type="entry name" value="Helicase_C-like"/>
</dbReference>
<dbReference type="InterPro" id="IPR027417">
    <property type="entry name" value="P-loop_NTPase"/>
</dbReference>
<dbReference type="InterPro" id="IPR014014">
    <property type="entry name" value="RNA_helicase_DEAD_Q_motif"/>
</dbReference>
<dbReference type="PANTHER" id="PTHR47959">
    <property type="entry name" value="ATP-DEPENDENT RNA HELICASE RHLE-RELATED"/>
    <property type="match status" value="1"/>
</dbReference>
<dbReference type="PANTHER" id="PTHR47959:SF8">
    <property type="entry name" value="RNA HELICASE"/>
    <property type="match status" value="1"/>
</dbReference>
<dbReference type="Pfam" id="PF08147">
    <property type="entry name" value="DBP10CT"/>
    <property type="match status" value="1"/>
</dbReference>
<dbReference type="Pfam" id="PF00270">
    <property type="entry name" value="DEAD"/>
    <property type="match status" value="1"/>
</dbReference>
<dbReference type="Pfam" id="PF00271">
    <property type="entry name" value="Helicase_C"/>
    <property type="match status" value="1"/>
</dbReference>
<dbReference type="SMART" id="SM01123">
    <property type="entry name" value="DBP10CT"/>
    <property type="match status" value="1"/>
</dbReference>
<dbReference type="SMART" id="SM00487">
    <property type="entry name" value="DEXDc"/>
    <property type="match status" value="1"/>
</dbReference>
<dbReference type="SMART" id="SM00490">
    <property type="entry name" value="HELICc"/>
    <property type="match status" value="1"/>
</dbReference>
<dbReference type="SUPFAM" id="SSF52540">
    <property type="entry name" value="P-loop containing nucleoside triphosphate hydrolases"/>
    <property type="match status" value="1"/>
</dbReference>
<dbReference type="PROSITE" id="PS51192">
    <property type="entry name" value="HELICASE_ATP_BIND_1"/>
    <property type="match status" value="1"/>
</dbReference>
<dbReference type="PROSITE" id="PS51194">
    <property type="entry name" value="HELICASE_CTER"/>
    <property type="match status" value="1"/>
</dbReference>
<dbReference type="PROSITE" id="PS51195">
    <property type="entry name" value="Q_MOTIF"/>
    <property type="match status" value="1"/>
</dbReference>
<name>RH29_ORYSI</name>
<feature type="chain" id="PRO_0000302059" description="DEAD-box ATP-dependent RNA helicase 29">
    <location>
        <begin position="1"/>
        <end position="851"/>
    </location>
</feature>
<feature type="domain" description="Helicase ATP-binding" evidence="1">
    <location>
        <begin position="80"/>
        <end position="253"/>
    </location>
</feature>
<feature type="domain" description="Helicase C-terminal" evidence="2">
    <location>
        <begin position="277"/>
        <end position="426"/>
    </location>
</feature>
<feature type="region of interest" description="Disordered" evidence="3">
    <location>
        <begin position="1"/>
        <end position="49"/>
    </location>
</feature>
<feature type="region of interest" description="Disordered" evidence="3">
    <location>
        <begin position="702"/>
        <end position="851"/>
    </location>
</feature>
<feature type="short sequence motif" description="Q motif">
    <location>
        <begin position="49"/>
        <end position="77"/>
    </location>
</feature>
<feature type="short sequence motif" description="DEAD box">
    <location>
        <begin position="201"/>
        <end position="204"/>
    </location>
</feature>
<feature type="compositionally biased region" description="Low complexity" evidence="3">
    <location>
        <begin position="7"/>
        <end position="20"/>
    </location>
</feature>
<feature type="compositionally biased region" description="Basic and acidic residues" evidence="3">
    <location>
        <begin position="24"/>
        <end position="42"/>
    </location>
</feature>
<feature type="compositionally biased region" description="Basic residues" evidence="3">
    <location>
        <begin position="733"/>
        <end position="746"/>
    </location>
</feature>
<feature type="compositionally biased region" description="Basic and acidic residues" evidence="3">
    <location>
        <begin position="773"/>
        <end position="787"/>
    </location>
</feature>
<feature type="compositionally biased region" description="Basic and acidic residues" evidence="3">
    <location>
        <begin position="796"/>
        <end position="825"/>
    </location>
</feature>
<feature type="compositionally biased region" description="Basic residues" evidence="3">
    <location>
        <begin position="841"/>
        <end position="851"/>
    </location>
</feature>
<feature type="binding site" evidence="1">
    <location>
        <begin position="93"/>
        <end position="100"/>
    </location>
    <ligand>
        <name>ATP</name>
        <dbReference type="ChEBI" id="CHEBI:30616"/>
    </ligand>
</feature>
<feature type="sequence conflict" description="In Ref. 1; AAU01909." evidence="4" ref="1">
    <original>P</original>
    <variation>L</variation>
    <location>
        <position position="30"/>
    </location>
</feature>
<feature type="sequence conflict" description="In Ref. 1; AAU01909." evidence="4" ref="1">
    <original>K</original>
    <variation>R</variation>
    <location>
        <position position="44"/>
    </location>
</feature>
<feature type="sequence conflict" description="In Ref. 1; AAU01909." evidence="4" ref="1">
    <original>K</original>
    <variation>E</variation>
    <location>
        <position position="342"/>
    </location>
</feature>
<feature type="sequence conflict" description="In Ref. 1; AAU01909." evidence="4" ref="1">
    <original>R</original>
    <variation>K</variation>
    <location>
        <position position="462"/>
    </location>
</feature>
<protein>
    <recommendedName>
        <fullName>DEAD-box ATP-dependent RNA helicase 29</fullName>
        <shortName>RNAH</shortName>
        <ecNumber>3.6.4.13</ecNumber>
    </recommendedName>
</protein>
<comment type="catalytic activity">
    <reaction>
        <text>ATP + H2O = ADP + phosphate + H(+)</text>
        <dbReference type="Rhea" id="RHEA:13065"/>
        <dbReference type="ChEBI" id="CHEBI:15377"/>
        <dbReference type="ChEBI" id="CHEBI:15378"/>
        <dbReference type="ChEBI" id="CHEBI:30616"/>
        <dbReference type="ChEBI" id="CHEBI:43474"/>
        <dbReference type="ChEBI" id="CHEBI:456216"/>
        <dbReference type="EC" id="3.6.4.13"/>
    </reaction>
</comment>
<comment type="domain">
    <text>The Q motif is unique to and characteristic of the DEAD box family of RNA helicases and controls ATP binding and hydrolysis.</text>
</comment>
<comment type="similarity">
    <text evidence="4">Belongs to the DEAD box helicase family. DDX54/DBP10 subfamily.</text>
</comment>
<comment type="sequence caution" evidence="4">
    <conflict type="erroneous initiation">
        <sequence resource="EMBL-CDS" id="AAU01909"/>
    </conflict>
</comment>
<reference key="1">
    <citation type="submission" date="2004-06" db="EMBL/GenBank/DDBJ databases">
        <title>Isolation of anther-specific genes during early pollen development in rice.</title>
        <authorList>
            <person name="Yau C.P."/>
            <person name="Zhuang C.X."/>
            <person name="Zee S.Y."/>
            <person name="Yip W.K."/>
        </authorList>
    </citation>
    <scope>NUCLEOTIDE SEQUENCE [MRNA]</scope>
    <source>
        <strain>cv. IR36</strain>
        <tissue>Anther</tissue>
    </source>
</reference>
<reference key="2">
    <citation type="journal article" date="2005" name="PLoS Biol.">
        <title>The genomes of Oryza sativa: a history of duplications.</title>
        <authorList>
            <person name="Yu J."/>
            <person name="Wang J."/>
            <person name="Lin W."/>
            <person name="Li S."/>
            <person name="Li H."/>
            <person name="Zhou J."/>
            <person name="Ni P."/>
            <person name="Dong W."/>
            <person name="Hu S."/>
            <person name="Zeng C."/>
            <person name="Zhang J."/>
            <person name="Zhang Y."/>
            <person name="Li R."/>
            <person name="Xu Z."/>
            <person name="Li S."/>
            <person name="Li X."/>
            <person name="Zheng H."/>
            <person name="Cong L."/>
            <person name="Lin L."/>
            <person name="Yin J."/>
            <person name="Geng J."/>
            <person name="Li G."/>
            <person name="Shi J."/>
            <person name="Liu J."/>
            <person name="Lv H."/>
            <person name="Li J."/>
            <person name="Wang J."/>
            <person name="Deng Y."/>
            <person name="Ran L."/>
            <person name="Shi X."/>
            <person name="Wang X."/>
            <person name="Wu Q."/>
            <person name="Li C."/>
            <person name="Ren X."/>
            <person name="Wang J."/>
            <person name="Wang X."/>
            <person name="Li D."/>
            <person name="Liu D."/>
            <person name="Zhang X."/>
            <person name="Ji Z."/>
            <person name="Zhao W."/>
            <person name="Sun Y."/>
            <person name="Zhang Z."/>
            <person name="Bao J."/>
            <person name="Han Y."/>
            <person name="Dong L."/>
            <person name="Ji J."/>
            <person name="Chen P."/>
            <person name="Wu S."/>
            <person name="Liu J."/>
            <person name="Xiao Y."/>
            <person name="Bu D."/>
            <person name="Tan J."/>
            <person name="Yang L."/>
            <person name="Ye C."/>
            <person name="Zhang J."/>
            <person name="Xu J."/>
            <person name="Zhou Y."/>
            <person name="Yu Y."/>
            <person name="Zhang B."/>
            <person name="Zhuang S."/>
            <person name="Wei H."/>
            <person name="Liu B."/>
            <person name="Lei M."/>
            <person name="Yu H."/>
            <person name="Li Y."/>
            <person name="Xu H."/>
            <person name="Wei S."/>
            <person name="He X."/>
            <person name="Fang L."/>
            <person name="Zhang Z."/>
            <person name="Zhang Y."/>
            <person name="Huang X."/>
            <person name="Su Z."/>
            <person name="Tong W."/>
            <person name="Li J."/>
            <person name="Tong Z."/>
            <person name="Li S."/>
            <person name="Ye J."/>
            <person name="Wang L."/>
            <person name="Fang L."/>
            <person name="Lei T."/>
            <person name="Chen C.-S."/>
            <person name="Chen H.-C."/>
            <person name="Xu Z."/>
            <person name="Li H."/>
            <person name="Huang H."/>
            <person name="Zhang F."/>
            <person name="Xu H."/>
            <person name="Li N."/>
            <person name="Zhao C."/>
            <person name="Li S."/>
            <person name="Dong L."/>
            <person name="Huang Y."/>
            <person name="Li L."/>
            <person name="Xi Y."/>
            <person name="Qi Q."/>
            <person name="Li W."/>
            <person name="Zhang B."/>
            <person name="Hu W."/>
            <person name="Zhang Y."/>
            <person name="Tian X."/>
            <person name="Jiao Y."/>
            <person name="Liang X."/>
            <person name="Jin J."/>
            <person name="Gao L."/>
            <person name="Zheng W."/>
            <person name="Hao B."/>
            <person name="Liu S.-M."/>
            <person name="Wang W."/>
            <person name="Yuan L."/>
            <person name="Cao M."/>
            <person name="McDermott J."/>
            <person name="Samudrala R."/>
            <person name="Wang J."/>
            <person name="Wong G.K.-S."/>
            <person name="Yang H."/>
        </authorList>
    </citation>
    <scope>NUCLEOTIDE SEQUENCE [LARGE SCALE GENOMIC DNA]</scope>
    <source>
        <strain>cv. 93-11</strain>
    </source>
</reference>
<keyword id="KW-0067">ATP-binding</keyword>
<keyword id="KW-0347">Helicase</keyword>
<keyword id="KW-0378">Hydrolase</keyword>
<keyword id="KW-0547">Nucleotide-binding</keyword>
<keyword id="KW-1185">Reference proteome</keyword>
<keyword id="KW-0694">RNA-binding</keyword>
<sequence length="851" mass="95478">MARLNPSKPSSRGGKPRSSSADAMAEHKPPPGRPKREGEGASKKKAKSGGFESMGLCEEVYRGVRHKGYRVPTPIQRKAMPLILAGHDIAAMARTGSGKTAAFLVPMIQRLRRHDAGAGIRALILSPTRDLATQTLKFAQQLGKFTDLKISLIVGGDSMESQFEELAENPDIIIATPGRLVHHLAEVEDLNLRTVEYVVFDEADSLFSLGLIQQLHDILHKLSDTRQTLLFSATLPQALADFAKAGLRDPQIVRLDLDKKISPDLKLAFFTLRQEEKLAALLYLVRERISSEEQTIIFVSTKHHVEFLNILFREEGLEPSLSYGAMDQEARNIHISKFRARKTMILIVTDVAARGLDIPLLDNVVNWDFPAKPKLFVHRVGRVARQGRSGTAYTFVTSEDMAYLLDLHLFLSKPLRPAPTEEELLKDMEGMNLKIDRALANGETVYGRFPQTIIDLVSDGIREVINGCTDLIALEKPCTNAFHLYLKTRPMPSTESIRRVKDLPREGLHPIFRDVLGSDELSALAFSERLKSFRPKQTILEAEGEAARGSNQWLDVMKKKREVHEGIINLVHQKNNVDHEPKEELVENISNWERKDVCGNKRKLQSFRDEEYYISSVPQNQHLEAGLSVRANEGFVENRLDAAVLDLVDDETSGMQAQKTRYHWKKNKFVKLNSGDRVTATGKIKTESGAKLKPTKTGIYKKWQQKTHRSIDTGRKYGGFAEEGASTTGSHQRGNRKHTAAGRGRRYIPNADVPSEIRNPEQIQKSRQQKAMDIARMKNRSTKESKFQKFQKNNRRHDGPSKDGKFQKNRRPDGNGKNRRPDGNGKGRGKGKGNANGFGKGKGKMKGKGTR</sequence>
<evidence type="ECO:0000255" key="1">
    <source>
        <dbReference type="PROSITE-ProRule" id="PRU00541"/>
    </source>
</evidence>
<evidence type="ECO:0000255" key="2">
    <source>
        <dbReference type="PROSITE-ProRule" id="PRU00542"/>
    </source>
</evidence>
<evidence type="ECO:0000256" key="3">
    <source>
        <dbReference type="SAM" id="MobiDB-lite"/>
    </source>
</evidence>
<evidence type="ECO:0000305" key="4"/>
<organism>
    <name type="scientific">Oryza sativa subsp. indica</name>
    <name type="common">Rice</name>
    <dbReference type="NCBI Taxonomy" id="39946"/>
    <lineage>
        <taxon>Eukaryota</taxon>
        <taxon>Viridiplantae</taxon>
        <taxon>Streptophyta</taxon>
        <taxon>Embryophyta</taxon>
        <taxon>Tracheophyta</taxon>
        <taxon>Spermatophyta</taxon>
        <taxon>Magnoliopsida</taxon>
        <taxon>Liliopsida</taxon>
        <taxon>Poales</taxon>
        <taxon>Poaceae</taxon>
        <taxon>BOP clade</taxon>
        <taxon>Oryzoideae</taxon>
        <taxon>Oryzeae</taxon>
        <taxon>Oryzinae</taxon>
        <taxon>Oryza</taxon>
        <taxon>Oryza sativa</taxon>
    </lineage>
</organism>
<gene>
    <name type="ORF">OsI_028228</name>
</gene>
<proteinExistence type="evidence at transcript level"/>